<dbReference type="EC" id="2.7.1.33"/>
<dbReference type="EMBL" id="AL596166">
    <property type="protein sequence ID" value="CAC96155.1"/>
    <property type="molecule type" value="Genomic_DNA"/>
</dbReference>
<dbReference type="PIR" id="AC1548">
    <property type="entry name" value="AC1548"/>
</dbReference>
<dbReference type="RefSeq" id="WP_003761370.1">
    <property type="nucleotide sequence ID" value="NC_003212.1"/>
</dbReference>
<dbReference type="SMR" id="Q92D94"/>
<dbReference type="STRING" id="272626.gene:17565253"/>
<dbReference type="GeneID" id="93234368"/>
<dbReference type="KEGG" id="lin:lin0923"/>
<dbReference type="eggNOG" id="COG1072">
    <property type="taxonomic scope" value="Bacteria"/>
</dbReference>
<dbReference type="HOGENOM" id="CLU_053818_1_1_9"/>
<dbReference type="OrthoDB" id="1550976at2"/>
<dbReference type="UniPathway" id="UPA00241">
    <property type="reaction ID" value="UER00352"/>
</dbReference>
<dbReference type="Proteomes" id="UP000002513">
    <property type="component" value="Chromosome"/>
</dbReference>
<dbReference type="GO" id="GO:0005737">
    <property type="term" value="C:cytoplasm"/>
    <property type="evidence" value="ECO:0007669"/>
    <property type="project" value="UniProtKB-SubCell"/>
</dbReference>
<dbReference type="GO" id="GO:0005524">
    <property type="term" value="F:ATP binding"/>
    <property type="evidence" value="ECO:0007669"/>
    <property type="project" value="UniProtKB-UniRule"/>
</dbReference>
<dbReference type="GO" id="GO:0004594">
    <property type="term" value="F:pantothenate kinase activity"/>
    <property type="evidence" value="ECO:0007669"/>
    <property type="project" value="UniProtKB-UniRule"/>
</dbReference>
<dbReference type="GO" id="GO:0015937">
    <property type="term" value="P:coenzyme A biosynthetic process"/>
    <property type="evidence" value="ECO:0007669"/>
    <property type="project" value="UniProtKB-UniRule"/>
</dbReference>
<dbReference type="CDD" id="cd02025">
    <property type="entry name" value="PanK"/>
    <property type="match status" value="1"/>
</dbReference>
<dbReference type="FunFam" id="3.40.50.300:FF:001878">
    <property type="entry name" value="Pantothenate kinase"/>
    <property type="match status" value="1"/>
</dbReference>
<dbReference type="Gene3D" id="3.40.50.300">
    <property type="entry name" value="P-loop containing nucleotide triphosphate hydrolases"/>
    <property type="match status" value="1"/>
</dbReference>
<dbReference type="HAMAP" id="MF_00215">
    <property type="entry name" value="Pantothen_kinase_1"/>
    <property type="match status" value="1"/>
</dbReference>
<dbReference type="InterPro" id="IPR027417">
    <property type="entry name" value="P-loop_NTPase"/>
</dbReference>
<dbReference type="InterPro" id="IPR004566">
    <property type="entry name" value="PanK"/>
</dbReference>
<dbReference type="InterPro" id="IPR006083">
    <property type="entry name" value="PRK/URK"/>
</dbReference>
<dbReference type="NCBIfam" id="TIGR00554">
    <property type="entry name" value="panK_bact"/>
    <property type="match status" value="1"/>
</dbReference>
<dbReference type="PANTHER" id="PTHR10285">
    <property type="entry name" value="URIDINE KINASE"/>
    <property type="match status" value="1"/>
</dbReference>
<dbReference type="Pfam" id="PF00485">
    <property type="entry name" value="PRK"/>
    <property type="match status" value="1"/>
</dbReference>
<dbReference type="PIRSF" id="PIRSF000545">
    <property type="entry name" value="Pantothenate_kin"/>
    <property type="match status" value="1"/>
</dbReference>
<dbReference type="SUPFAM" id="SSF52540">
    <property type="entry name" value="P-loop containing nucleoside triphosphate hydrolases"/>
    <property type="match status" value="1"/>
</dbReference>
<keyword id="KW-0067">ATP-binding</keyword>
<keyword id="KW-0173">Coenzyme A biosynthesis</keyword>
<keyword id="KW-0963">Cytoplasm</keyword>
<keyword id="KW-0418">Kinase</keyword>
<keyword id="KW-0547">Nucleotide-binding</keyword>
<keyword id="KW-0808">Transferase</keyword>
<sequence>MNDYNHYFHFPREEWRKLEVSKDQILTAEELEEIRGLNDRISLQDISEIYLPLIKLIAIQYHEAIFIHGEKMEYLKKKESRAPFIIALAGSVAVGKSTTARVFKLMLDRWFSKTRQVELVTTDGFLYPNKVLEERGIMDKKGFPESYDRDRFAKFLTDLKANKEDVEVPLYSHFTYDVLDETRMMHNPDIVIIEGINVLQADQHESLYPSDFFDFSVYMDANEADIKNWYLERFFMLRETAFQDESSYFHPYTKISKKEAETFALGVWDTINGVNLKENIEKTKYRADLVLHKGTDHLISDIYLRK</sequence>
<comment type="catalytic activity">
    <reaction>
        <text>(R)-pantothenate + ATP = (R)-4'-phosphopantothenate + ADP + H(+)</text>
        <dbReference type="Rhea" id="RHEA:16373"/>
        <dbReference type="ChEBI" id="CHEBI:10986"/>
        <dbReference type="ChEBI" id="CHEBI:15378"/>
        <dbReference type="ChEBI" id="CHEBI:29032"/>
        <dbReference type="ChEBI" id="CHEBI:30616"/>
        <dbReference type="ChEBI" id="CHEBI:456216"/>
        <dbReference type="EC" id="2.7.1.33"/>
    </reaction>
</comment>
<comment type="pathway">
    <text>Cofactor biosynthesis; coenzyme A biosynthesis; CoA from (R)-pantothenate: step 1/5.</text>
</comment>
<comment type="subcellular location">
    <subcellularLocation>
        <location evidence="1">Cytoplasm</location>
    </subcellularLocation>
</comment>
<comment type="similarity">
    <text evidence="3">Belongs to the prokaryotic pantothenate kinase family.</text>
</comment>
<organism>
    <name type="scientific">Listeria innocua serovar 6a (strain ATCC BAA-680 / CLIP 11262)</name>
    <dbReference type="NCBI Taxonomy" id="272626"/>
    <lineage>
        <taxon>Bacteria</taxon>
        <taxon>Bacillati</taxon>
        <taxon>Bacillota</taxon>
        <taxon>Bacilli</taxon>
        <taxon>Bacillales</taxon>
        <taxon>Listeriaceae</taxon>
        <taxon>Listeria</taxon>
    </lineage>
</organism>
<gene>
    <name type="primary">coaA</name>
    <name type="ordered locus">lin0923</name>
</gene>
<accession>Q92D94</accession>
<evidence type="ECO:0000250" key="1"/>
<evidence type="ECO:0000255" key="2"/>
<evidence type="ECO:0000305" key="3"/>
<reference key="1">
    <citation type="journal article" date="2001" name="Science">
        <title>Comparative genomics of Listeria species.</title>
        <authorList>
            <person name="Glaser P."/>
            <person name="Frangeul L."/>
            <person name="Buchrieser C."/>
            <person name="Rusniok C."/>
            <person name="Amend A."/>
            <person name="Baquero F."/>
            <person name="Berche P."/>
            <person name="Bloecker H."/>
            <person name="Brandt P."/>
            <person name="Chakraborty T."/>
            <person name="Charbit A."/>
            <person name="Chetouani F."/>
            <person name="Couve E."/>
            <person name="de Daruvar A."/>
            <person name="Dehoux P."/>
            <person name="Domann E."/>
            <person name="Dominguez-Bernal G."/>
            <person name="Duchaud E."/>
            <person name="Durant L."/>
            <person name="Dussurget O."/>
            <person name="Entian K.-D."/>
            <person name="Fsihi H."/>
            <person name="Garcia-del Portillo F."/>
            <person name="Garrido P."/>
            <person name="Gautier L."/>
            <person name="Goebel W."/>
            <person name="Gomez-Lopez N."/>
            <person name="Hain T."/>
            <person name="Hauf J."/>
            <person name="Jackson D."/>
            <person name="Jones L.-M."/>
            <person name="Kaerst U."/>
            <person name="Kreft J."/>
            <person name="Kuhn M."/>
            <person name="Kunst F."/>
            <person name="Kurapkat G."/>
            <person name="Madueno E."/>
            <person name="Maitournam A."/>
            <person name="Mata Vicente J."/>
            <person name="Ng E."/>
            <person name="Nedjari H."/>
            <person name="Nordsiek G."/>
            <person name="Novella S."/>
            <person name="de Pablos B."/>
            <person name="Perez-Diaz J.-C."/>
            <person name="Purcell R."/>
            <person name="Remmel B."/>
            <person name="Rose M."/>
            <person name="Schlueter T."/>
            <person name="Simoes N."/>
            <person name="Tierrez A."/>
            <person name="Vazquez-Boland J.-A."/>
            <person name="Voss H."/>
            <person name="Wehland J."/>
            <person name="Cossart P."/>
        </authorList>
    </citation>
    <scope>NUCLEOTIDE SEQUENCE [LARGE SCALE GENOMIC DNA]</scope>
    <source>
        <strain>ATCC BAA-680 / CLIP 11262</strain>
    </source>
</reference>
<name>COAA_LISIN</name>
<protein>
    <recommendedName>
        <fullName>Pantothenate kinase</fullName>
        <ecNumber>2.7.1.33</ecNumber>
    </recommendedName>
    <alternativeName>
        <fullName>Pantothenic acid kinase</fullName>
    </alternativeName>
</protein>
<proteinExistence type="inferred from homology"/>
<feature type="chain" id="PRO_0000194435" description="Pantothenate kinase">
    <location>
        <begin position="1"/>
        <end position="306"/>
    </location>
</feature>
<feature type="binding site" evidence="2">
    <location>
        <begin position="90"/>
        <end position="97"/>
    </location>
    <ligand>
        <name>ATP</name>
        <dbReference type="ChEBI" id="CHEBI:30616"/>
    </ligand>
</feature>